<name>Y2567_MYCTU</name>
<protein>
    <recommendedName>
        <fullName>Uncharacterized protein Rv2567</fullName>
    </recommendedName>
</protein>
<proteinExistence type="evidence at protein level"/>
<keyword id="KW-1185">Reference proteome</keyword>
<accession>P9WL97</accession>
<accession>L0TCS6</accession>
<accession>Q50654</accession>
<accession>Q50731</accession>
<feature type="chain" id="PRO_0000104044" description="Uncharacterized protein Rv2567">
    <location>
        <begin position="1"/>
        <end position="884"/>
    </location>
</feature>
<gene>
    <name type="ordered locus">Rv2567</name>
    <name type="ORF">MTCY227.34c</name>
    <name type="ORF">MTCY9C4.01c</name>
</gene>
<reference key="1">
    <citation type="journal article" date="1998" name="Nature">
        <title>Deciphering the biology of Mycobacterium tuberculosis from the complete genome sequence.</title>
        <authorList>
            <person name="Cole S.T."/>
            <person name="Brosch R."/>
            <person name="Parkhill J."/>
            <person name="Garnier T."/>
            <person name="Churcher C.M."/>
            <person name="Harris D.E."/>
            <person name="Gordon S.V."/>
            <person name="Eiglmeier K."/>
            <person name="Gas S."/>
            <person name="Barry C.E. III"/>
            <person name="Tekaia F."/>
            <person name="Badcock K."/>
            <person name="Basham D."/>
            <person name="Brown D."/>
            <person name="Chillingworth T."/>
            <person name="Connor R."/>
            <person name="Davies R.M."/>
            <person name="Devlin K."/>
            <person name="Feltwell T."/>
            <person name="Gentles S."/>
            <person name="Hamlin N."/>
            <person name="Holroyd S."/>
            <person name="Hornsby T."/>
            <person name="Jagels K."/>
            <person name="Krogh A."/>
            <person name="McLean J."/>
            <person name="Moule S."/>
            <person name="Murphy L.D."/>
            <person name="Oliver S."/>
            <person name="Osborne J."/>
            <person name="Quail M.A."/>
            <person name="Rajandream M.A."/>
            <person name="Rogers J."/>
            <person name="Rutter S."/>
            <person name="Seeger K."/>
            <person name="Skelton S."/>
            <person name="Squares S."/>
            <person name="Squares R."/>
            <person name="Sulston J.E."/>
            <person name="Taylor K."/>
            <person name="Whitehead S."/>
            <person name="Barrell B.G."/>
        </authorList>
    </citation>
    <scope>NUCLEOTIDE SEQUENCE [LARGE SCALE GENOMIC DNA]</scope>
    <source>
        <strain>ATCC 25618 / H37Rv</strain>
    </source>
</reference>
<reference key="2">
    <citation type="journal article" date="2011" name="Mol. Cell. Proteomics">
        <title>Proteogenomic analysis of Mycobacterium tuberculosis by high resolution mass spectrometry.</title>
        <authorList>
            <person name="Kelkar D.S."/>
            <person name="Kumar D."/>
            <person name="Kumar P."/>
            <person name="Balakrishnan L."/>
            <person name="Muthusamy B."/>
            <person name="Yadav A.K."/>
            <person name="Shrivastava P."/>
            <person name="Marimuthu A."/>
            <person name="Anand S."/>
            <person name="Sundaram H."/>
            <person name="Kingsbury R."/>
            <person name="Harsha H.C."/>
            <person name="Nair B."/>
            <person name="Prasad T.S."/>
            <person name="Chauhan D.S."/>
            <person name="Katoch K."/>
            <person name="Katoch V.M."/>
            <person name="Kumar P."/>
            <person name="Chaerkady R."/>
            <person name="Ramachandran S."/>
            <person name="Dash D."/>
            <person name="Pandey A."/>
        </authorList>
    </citation>
    <scope>IDENTIFICATION BY MASS SPECTROMETRY [LARGE SCALE ANALYSIS]</scope>
    <source>
        <strain>ATCC 25618 / H37Rv</strain>
    </source>
</reference>
<dbReference type="EMBL" id="AL123456">
    <property type="protein sequence ID" value="CCP45363.1"/>
    <property type="molecule type" value="Genomic_DNA"/>
</dbReference>
<dbReference type="PIR" id="C70729">
    <property type="entry name" value="C70729"/>
</dbReference>
<dbReference type="RefSeq" id="NP_217083.1">
    <property type="nucleotide sequence ID" value="NC_000962.3"/>
</dbReference>
<dbReference type="RefSeq" id="WP_003911903.1">
    <property type="nucleotide sequence ID" value="NZ_NVQJ01000023.1"/>
</dbReference>
<dbReference type="SMR" id="P9WL97"/>
<dbReference type="STRING" id="83332.Rv2567"/>
<dbReference type="PaxDb" id="83332-Rv2567"/>
<dbReference type="DNASU" id="888578"/>
<dbReference type="GeneID" id="888578"/>
<dbReference type="KEGG" id="mtu:Rv2567"/>
<dbReference type="KEGG" id="mtv:RVBD_2567"/>
<dbReference type="TubercuList" id="Rv2567"/>
<dbReference type="eggNOG" id="COG2307">
    <property type="taxonomic scope" value="Bacteria"/>
</dbReference>
<dbReference type="eggNOG" id="COG2308">
    <property type="taxonomic scope" value="Bacteria"/>
</dbReference>
<dbReference type="InParanoid" id="P9WL97"/>
<dbReference type="OrthoDB" id="9803842at2"/>
<dbReference type="PhylomeDB" id="P9WL97"/>
<dbReference type="Proteomes" id="UP000001584">
    <property type="component" value="Chromosome"/>
</dbReference>
<dbReference type="GO" id="GO:0005886">
    <property type="term" value="C:plasma membrane"/>
    <property type="evidence" value="ECO:0007005"/>
    <property type="project" value="MTBBASE"/>
</dbReference>
<dbReference type="FunFam" id="3.40.50.11290:FF:000001">
    <property type="entry name" value="Hypothetical alanine and leucine rich protein"/>
    <property type="match status" value="1"/>
</dbReference>
<dbReference type="Gene3D" id="3.30.1490.270">
    <property type="match status" value="1"/>
</dbReference>
<dbReference type="Gene3D" id="3.40.50.11290">
    <property type="match status" value="1"/>
</dbReference>
<dbReference type="InterPro" id="IPR051680">
    <property type="entry name" value="ATP-dep_Glu-Cys_Ligase-2"/>
</dbReference>
<dbReference type="InterPro" id="IPR007302">
    <property type="entry name" value="CP_ATPgrasp"/>
</dbReference>
<dbReference type="InterPro" id="IPR007296">
    <property type="entry name" value="DUF403"/>
</dbReference>
<dbReference type="PANTHER" id="PTHR34595:SF2">
    <property type="entry name" value="BLR2978 PROTEIN"/>
    <property type="match status" value="1"/>
</dbReference>
<dbReference type="PANTHER" id="PTHR34595">
    <property type="entry name" value="BLR5612 PROTEIN"/>
    <property type="match status" value="1"/>
</dbReference>
<dbReference type="Pfam" id="PF04168">
    <property type="entry name" value="Alpha-E"/>
    <property type="match status" value="1"/>
</dbReference>
<dbReference type="Pfam" id="PF04174">
    <property type="entry name" value="CP_ATPgrasp_1"/>
    <property type="match status" value="1"/>
</dbReference>
<dbReference type="SUPFAM" id="SSF56059">
    <property type="entry name" value="Glutathione synthetase ATP-binding domain-like"/>
    <property type="match status" value="1"/>
</dbReference>
<sequence length="884" mass="95449">MAPSASAATNGYDVDRLLAGYRTARAQETLFDLRDGPGAGYDEFVDDDGNVRPTWTELADAVAERGKAGLDRLRSVVHSLIDHDGITYTAIDAHRDALTGDHDLEPGPWRLDPLPLVISAADWEVLEAGLVQRSRLLDAILADLYGPRSMLTEGVLPPEMLFAHPGYVRAANGIQMPGRHQLFMHACDLSRLPDGTFQVNADWTQAPSGSGYAMADRRVVAHAVPDLYEELAPRPTTPFAQALRLALIDAAPDVAQDPVVVVLSPGIYSETAFDQAYLATLLGFPLVESADLVVRDGKLWMRSLGTLKRVDVVLRRVDAHYADPLDLRADSRLGVVGLVEAQHRGTVTVVNTLGSGILENPGLLRFLPQLSERLLDESPLLHTAPVYWGGIASERSHLLANVSSLLIKSTVSGETLVGPTLSSAQLADLAVRIEAMPWQWVGQELPQFSSAPTNHAGVLSSAGVGMRLFTVAQRSGYAPMIGGLGYVLAPGPAAYTLKTVAAKDIWVRPTERAHAEVITVPVLAPPAKTGAGTWAVSSPRVLSDLFWMGRYGERAENMARLLIVTRERYHVFRHQQDTDESECVPVLMAALGKITGYDTATGAGSAYDRADMIAVAPSTLWSLTVDPDRPGSLVQSVEGLALAAQAVRDQLSNDTWMVLANVERAVEHKSDPPQSLAEADAVLASAQAETLAGMLTLSGVAGESMVHDVGWTMMDIGKRIERGLWLTALLQATLSTVRHPAAEQAIIEATLVACESSVIYRRRTVGKFSVAAVTELMLFDAQNPRSLVYQLERLRADLKDLPGSSGSSRPERMVDEMNTRLRRSHPEELEEVSADGLRAELAELLAGIHASLRDVADVLTATQLALPGGMQPLWGPDQRRVMPA</sequence>
<organism>
    <name type="scientific">Mycobacterium tuberculosis (strain ATCC 25618 / H37Rv)</name>
    <dbReference type="NCBI Taxonomy" id="83332"/>
    <lineage>
        <taxon>Bacteria</taxon>
        <taxon>Bacillati</taxon>
        <taxon>Actinomycetota</taxon>
        <taxon>Actinomycetes</taxon>
        <taxon>Mycobacteriales</taxon>
        <taxon>Mycobacteriaceae</taxon>
        <taxon>Mycobacterium</taxon>
        <taxon>Mycobacterium tuberculosis complex</taxon>
    </lineage>
</organism>